<organism>
    <name type="scientific">Syntrophotalea carbinolica (strain DSM 2380 / NBRC 103641 / GraBd1)</name>
    <name type="common">Pelobacter carbinolicus</name>
    <dbReference type="NCBI Taxonomy" id="338963"/>
    <lineage>
        <taxon>Bacteria</taxon>
        <taxon>Pseudomonadati</taxon>
        <taxon>Thermodesulfobacteriota</taxon>
        <taxon>Desulfuromonadia</taxon>
        <taxon>Desulfuromonadales</taxon>
        <taxon>Syntrophotaleaceae</taxon>
        <taxon>Syntrophotalea</taxon>
    </lineage>
</organism>
<protein>
    <recommendedName>
        <fullName evidence="1">ATP-dependent Clp protease proteolytic subunit</fullName>
        <ecNumber evidence="1">3.4.21.92</ecNumber>
    </recommendedName>
    <alternativeName>
        <fullName evidence="1">Endopeptidase Clp</fullName>
    </alternativeName>
</protein>
<proteinExistence type="inferred from homology"/>
<feature type="chain" id="PRO_0000226454" description="ATP-dependent Clp protease proteolytic subunit">
    <location>
        <begin position="1"/>
        <end position="194"/>
    </location>
</feature>
<feature type="active site" description="Nucleophile" evidence="1">
    <location>
        <position position="98"/>
    </location>
</feature>
<feature type="active site" evidence="1">
    <location>
        <position position="123"/>
    </location>
</feature>
<gene>
    <name evidence="1" type="primary">clpP</name>
    <name type="ordered locus">Pcar_1689</name>
</gene>
<sequence length="194" mass="21317">MSLIPMVVEQTGRGERAYDIFSRLLKDRIIFLGGAVDDQVANLIIAQMLFLESEDPEKEIFLYINSPGGVVTAGMAIYDTMQYVRCPVSTLCVGQAASMGAVLLAAGGEGKRFALPHARIMIHQPWGGFQGQATDINIHAQEILRLRETLNGVLASHTGQTLEKIATDTERDFFMGSEEAKKYGIVDDIVKRKV</sequence>
<evidence type="ECO:0000255" key="1">
    <source>
        <dbReference type="HAMAP-Rule" id="MF_00444"/>
    </source>
</evidence>
<comment type="function">
    <text evidence="1">Cleaves peptides in various proteins in a process that requires ATP hydrolysis. Has a chymotrypsin-like activity. Plays a major role in the degradation of misfolded proteins.</text>
</comment>
<comment type="catalytic activity">
    <reaction evidence="1">
        <text>Hydrolysis of proteins to small peptides in the presence of ATP and magnesium. alpha-casein is the usual test substrate. In the absence of ATP, only oligopeptides shorter than five residues are hydrolyzed (such as succinyl-Leu-Tyr-|-NHMec, and Leu-Tyr-Leu-|-Tyr-Trp, in which cleavage of the -Tyr-|-Leu- and -Tyr-|-Trp bonds also occurs).</text>
        <dbReference type="EC" id="3.4.21.92"/>
    </reaction>
</comment>
<comment type="subunit">
    <text evidence="1">Fourteen ClpP subunits assemble into 2 heptameric rings which stack back to back to give a disk-like structure with a central cavity, resembling the structure of eukaryotic proteasomes.</text>
</comment>
<comment type="subcellular location">
    <subcellularLocation>
        <location evidence="1">Cytoplasm</location>
    </subcellularLocation>
</comment>
<comment type="similarity">
    <text evidence="1">Belongs to the peptidase S14 family.</text>
</comment>
<accession>Q3A3X5</accession>
<dbReference type="EC" id="3.4.21.92" evidence="1"/>
<dbReference type="EMBL" id="CP000142">
    <property type="protein sequence ID" value="ABA88932.1"/>
    <property type="molecule type" value="Genomic_DNA"/>
</dbReference>
<dbReference type="RefSeq" id="WP_011341423.1">
    <property type="nucleotide sequence ID" value="NC_007498.2"/>
</dbReference>
<dbReference type="SMR" id="Q3A3X5"/>
<dbReference type="STRING" id="338963.Pcar_1689"/>
<dbReference type="MEROPS" id="S14.001"/>
<dbReference type="KEGG" id="pca:Pcar_1689"/>
<dbReference type="eggNOG" id="COG0740">
    <property type="taxonomic scope" value="Bacteria"/>
</dbReference>
<dbReference type="HOGENOM" id="CLU_058707_3_2_7"/>
<dbReference type="OrthoDB" id="9802800at2"/>
<dbReference type="Proteomes" id="UP000002534">
    <property type="component" value="Chromosome"/>
</dbReference>
<dbReference type="GO" id="GO:0005737">
    <property type="term" value="C:cytoplasm"/>
    <property type="evidence" value="ECO:0007669"/>
    <property type="project" value="UniProtKB-SubCell"/>
</dbReference>
<dbReference type="GO" id="GO:0009368">
    <property type="term" value="C:endopeptidase Clp complex"/>
    <property type="evidence" value="ECO:0007669"/>
    <property type="project" value="TreeGrafter"/>
</dbReference>
<dbReference type="GO" id="GO:0004176">
    <property type="term" value="F:ATP-dependent peptidase activity"/>
    <property type="evidence" value="ECO:0007669"/>
    <property type="project" value="InterPro"/>
</dbReference>
<dbReference type="GO" id="GO:0051117">
    <property type="term" value="F:ATPase binding"/>
    <property type="evidence" value="ECO:0007669"/>
    <property type="project" value="TreeGrafter"/>
</dbReference>
<dbReference type="GO" id="GO:0004252">
    <property type="term" value="F:serine-type endopeptidase activity"/>
    <property type="evidence" value="ECO:0007669"/>
    <property type="project" value="UniProtKB-UniRule"/>
</dbReference>
<dbReference type="GO" id="GO:0006515">
    <property type="term" value="P:protein quality control for misfolded or incompletely synthesized proteins"/>
    <property type="evidence" value="ECO:0007669"/>
    <property type="project" value="TreeGrafter"/>
</dbReference>
<dbReference type="CDD" id="cd07017">
    <property type="entry name" value="S14_ClpP_2"/>
    <property type="match status" value="1"/>
</dbReference>
<dbReference type="FunFam" id="3.90.226.10:FF:000001">
    <property type="entry name" value="ATP-dependent Clp protease proteolytic subunit"/>
    <property type="match status" value="1"/>
</dbReference>
<dbReference type="Gene3D" id="3.90.226.10">
    <property type="entry name" value="2-enoyl-CoA Hydratase, Chain A, domain 1"/>
    <property type="match status" value="1"/>
</dbReference>
<dbReference type="HAMAP" id="MF_00444">
    <property type="entry name" value="ClpP"/>
    <property type="match status" value="1"/>
</dbReference>
<dbReference type="InterPro" id="IPR001907">
    <property type="entry name" value="ClpP"/>
</dbReference>
<dbReference type="InterPro" id="IPR029045">
    <property type="entry name" value="ClpP/crotonase-like_dom_sf"/>
</dbReference>
<dbReference type="InterPro" id="IPR023562">
    <property type="entry name" value="ClpP/TepA"/>
</dbReference>
<dbReference type="InterPro" id="IPR033135">
    <property type="entry name" value="ClpP_His_AS"/>
</dbReference>
<dbReference type="InterPro" id="IPR018215">
    <property type="entry name" value="ClpP_Ser_AS"/>
</dbReference>
<dbReference type="NCBIfam" id="TIGR00493">
    <property type="entry name" value="clpP"/>
    <property type="match status" value="1"/>
</dbReference>
<dbReference type="NCBIfam" id="NF001368">
    <property type="entry name" value="PRK00277.1"/>
    <property type="match status" value="1"/>
</dbReference>
<dbReference type="NCBIfam" id="NF009205">
    <property type="entry name" value="PRK12553.1"/>
    <property type="match status" value="1"/>
</dbReference>
<dbReference type="PANTHER" id="PTHR10381">
    <property type="entry name" value="ATP-DEPENDENT CLP PROTEASE PROTEOLYTIC SUBUNIT"/>
    <property type="match status" value="1"/>
</dbReference>
<dbReference type="PANTHER" id="PTHR10381:SF70">
    <property type="entry name" value="ATP-DEPENDENT CLP PROTEASE PROTEOLYTIC SUBUNIT"/>
    <property type="match status" value="1"/>
</dbReference>
<dbReference type="Pfam" id="PF00574">
    <property type="entry name" value="CLP_protease"/>
    <property type="match status" value="1"/>
</dbReference>
<dbReference type="PRINTS" id="PR00127">
    <property type="entry name" value="CLPPROTEASEP"/>
</dbReference>
<dbReference type="SUPFAM" id="SSF52096">
    <property type="entry name" value="ClpP/crotonase"/>
    <property type="match status" value="1"/>
</dbReference>
<dbReference type="PROSITE" id="PS00382">
    <property type="entry name" value="CLP_PROTEASE_HIS"/>
    <property type="match status" value="1"/>
</dbReference>
<dbReference type="PROSITE" id="PS00381">
    <property type="entry name" value="CLP_PROTEASE_SER"/>
    <property type="match status" value="1"/>
</dbReference>
<name>CLPP_SYNC1</name>
<reference key="1">
    <citation type="submission" date="2005-10" db="EMBL/GenBank/DDBJ databases">
        <title>Complete sequence of Pelobacter carbinolicus DSM 2380.</title>
        <authorList>
            <person name="Copeland A."/>
            <person name="Lucas S."/>
            <person name="Lapidus A."/>
            <person name="Barry K."/>
            <person name="Detter J.C."/>
            <person name="Glavina T."/>
            <person name="Hammon N."/>
            <person name="Israni S."/>
            <person name="Pitluck S."/>
            <person name="Chertkov O."/>
            <person name="Schmutz J."/>
            <person name="Larimer F."/>
            <person name="Land M."/>
            <person name="Kyrpides N."/>
            <person name="Ivanova N."/>
            <person name="Richardson P."/>
        </authorList>
    </citation>
    <scope>NUCLEOTIDE SEQUENCE [LARGE SCALE GENOMIC DNA]</scope>
    <source>
        <strain>DSM 2380 / NBRC 103641 / GraBd1</strain>
    </source>
</reference>
<keyword id="KW-0963">Cytoplasm</keyword>
<keyword id="KW-0378">Hydrolase</keyword>
<keyword id="KW-0645">Protease</keyword>
<keyword id="KW-1185">Reference proteome</keyword>
<keyword id="KW-0720">Serine protease</keyword>